<sequence>MAKEDSIEMQGTIIDTLPNTMFRVELENGHIVTAHISGKMRKNYIRILTGDKVTVQLTPYDLSKGRIVFRAR</sequence>
<reference key="1">
    <citation type="journal article" date="2008" name="BMC Genomics">
        <title>Genomics of an extreme psychrophile, Psychromonas ingrahamii.</title>
        <authorList>
            <person name="Riley M."/>
            <person name="Staley J.T."/>
            <person name="Danchin A."/>
            <person name="Wang T.Z."/>
            <person name="Brettin T.S."/>
            <person name="Hauser L.J."/>
            <person name="Land M.L."/>
            <person name="Thompson L.S."/>
        </authorList>
    </citation>
    <scope>NUCLEOTIDE SEQUENCE [LARGE SCALE GENOMIC DNA]</scope>
    <source>
        <strain>DSM 17664 / CCUG 51855 / 37</strain>
    </source>
</reference>
<organism>
    <name type="scientific">Psychromonas ingrahamii (strain DSM 17664 / CCUG 51855 / 37)</name>
    <dbReference type="NCBI Taxonomy" id="357804"/>
    <lineage>
        <taxon>Bacteria</taxon>
        <taxon>Pseudomonadati</taxon>
        <taxon>Pseudomonadota</taxon>
        <taxon>Gammaproteobacteria</taxon>
        <taxon>Alteromonadales</taxon>
        <taxon>Psychromonadaceae</taxon>
        <taxon>Psychromonas</taxon>
    </lineage>
</organism>
<proteinExistence type="inferred from homology"/>
<evidence type="ECO:0000255" key="1">
    <source>
        <dbReference type="HAMAP-Rule" id="MF_00075"/>
    </source>
</evidence>
<feature type="chain" id="PRO_0000338895" description="Translation initiation factor IF-1">
    <location>
        <begin position="1"/>
        <end position="72"/>
    </location>
</feature>
<feature type="domain" description="S1-like" evidence="1">
    <location>
        <begin position="1"/>
        <end position="72"/>
    </location>
</feature>
<dbReference type="EMBL" id="CP000510">
    <property type="protein sequence ID" value="ABM02596.1"/>
    <property type="molecule type" value="Genomic_DNA"/>
</dbReference>
<dbReference type="RefSeq" id="WP_011769155.1">
    <property type="nucleotide sequence ID" value="NC_008709.1"/>
</dbReference>
<dbReference type="SMR" id="A1SSY1"/>
<dbReference type="STRING" id="357804.Ping_0744"/>
<dbReference type="KEGG" id="pin:Ping_0744"/>
<dbReference type="eggNOG" id="COG0361">
    <property type="taxonomic scope" value="Bacteria"/>
</dbReference>
<dbReference type="HOGENOM" id="CLU_151267_1_0_6"/>
<dbReference type="OrthoDB" id="9803250at2"/>
<dbReference type="Proteomes" id="UP000000639">
    <property type="component" value="Chromosome"/>
</dbReference>
<dbReference type="GO" id="GO:0005829">
    <property type="term" value="C:cytosol"/>
    <property type="evidence" value="ECO:0007669"/>
    <property type="project" value="TreeGrafter"/>
</dbReference>
<dbReference type="GO" id="GO:0043022">
    <property type="term" value="F:ribosome binding"/>
    <property type="evidence" value="ECO:0007669"/>
    <property type="project" value="UniProtKB-UniRule"/>
</dbReference>
<dbReference type="GO" id="GO:0019843">
    <property type="term" value="F:rRNA binding"/>
    <property type="evidence" value="ECO:0007669"/>
    <property type="project" value="UniProtKB-UniRule"/>
</dbReference>
<dbReference type="GO" id="GO:0003743">
    <property type="term" value="F:translation initiation factor activity"/>
    <property type="evidence" value="ECO:0007669"/>
    <property type="project" value="UniProtKB-UniRule"/>
</dbReference>
<dbReference type="CDD" id="cd04451">
    <property type="entry name" value="S1_IF1"/>
    <property type="match status" value="1"/>
</dbReference>
<dbReference type="FunFam" id="2.40.50.140:FF:000002">
    <property type="entry name" value="Translation initiation factor IF-1"/>
    <property type="match status" value="1"/>
</dbReference>
<dbReference type="Gene3D" id="2.40.50.140">
    <property type="entry name" value="Nucleic acid-binding proteins"/>
    <property type="match status" value="1"/>
</dbReference>
<dbReference type="HAMAP" id="MF_00075">
    <property type="entry name" value="IF_1"/>
    <property type="match status" value="1"/>
</dbReference>
<dbReference type="InterPro" id="IPR012340">
    <property type="entry name" value="NA-bd_OB-fold"/>
</dbReference>
<dbReference type="InterPro" id="IPR006196">
    <property type="entry name" value="RNA-binding_domain_S1_IF1"/>
</dbReference>
<dbReference type="InterPro" id="IPR003029">
    <property type="entry name" value="S1_domain"/>
</dbReference>
<dbReference type="InterPro" id="IPR004368">
    <property type="entry name" value="TIF_IF1"/>
</dbReference>
<dbReference type="NCBIfam" id="TIGR00008">
    <property type="entry name" value="infA"/>
    <property type="match status" value="1"/>
</dbReference>
<dbReference type="PANTHER" id="PTHR33370">
    <property type="entry name" value="TRANSLATION INITIATION FACTOR IF-1, CHLOROPLASTIC"/>
    <property type="match status" value="1"/>
</dbReference>
<dbReference type="PANTHER" id="PTHR33370:SF1">
    <property type="entry name" value="TRANSLATION INITIATION FACTOR IF-1, CHLOROPLASTIC"/>
    <property type="match status" value="1"/>
</dbReference>
<dbReference type="Pfam" id="PF01176">
    <property type="entry name" value="eIF-1a"/>
    <property type="match status" value="1"/>
</dbReference>
<dbReference type="SMART" id="SM00316">
    <property type="entry name" value="S1"/>
    <property type="match status" value="1"/>
</dbReference>
<dbReference type="SUPFAM" id="SSF50249">
    <property type="entry name" value="Nucleic acid-binding proteins"/>
    <property type="match status" value="1"/>
</dbReference>
<dbReference type="PROSITE" id="PS50832">
    <property type="entry name" value="S1_IF1_TYPE"/>
    <property type="match status" value="1"/>
</dbReference>
<protein>
    <recommendedName>
        <fullName evidence="1">Translation initiation factor IF-1</fullName>
    </recommendedName>
</protein>
<keyword id="KW-0963">Cytoplasm</keyword>
<keyword id="KW-0396">Initiation factor</keyword>
<keyword id="KW-0648">Protein biosynthesis</keyword>
<keyword id="KW-1185">Reference proteome</keyword>
<keyword id="KW-0694">RNA-binding</keyword>
<keyword id="KW-0699">rRNA-binding</keyword>
<name>IF1_PSYIN</name>
<gene>
    <name evidence="1" type="primary">infA</name>
    <name type="ordered locus">Ping_0744</name>
</gene>
<comment type="function">
    <text evidence="1">One of the essential components for the initiation of protein synthesis. Stabilizes the binding of IF-2 and IF-3 on the 30S subunit to which N-formylmethionyl-tRNA(fMet) subsequently binds. Helps modulate mRNA selection, yielding the 30S pre-initiation complex (PIC). Upon addition of the 50S ribosomal subunit IF-1, IF-2 and IF-3 are released leaving the mature 70S translation initiation complex.</text>
</comment>
<comment type="subunit">
    <text evidence="1">Component of the 30S ribosomal translation pre-initiation complex which assembles on the 30S ribosome in the order IF-2 and IF-3, IF-1 and N-formylmethionyl-tRNA(fMet); mRNA recruitment can occur at any time during PIC assembly.</text>
</comment>
<comment type="subcellular location">
    <subcellularLocation>
        <location evidence="1">Cytoplasm</location>
    </subcellularLocation>
</comment>
<comment type="similarity">
    <text evidence="1">Belongs to the IF-1 family.</text>
</comment>
<accession>A1SSY1</accession>